<organism>
    <name type="scientific">Rhizobium leguminosarum bv. trifolii (strain WSM2304)</name>
    <dbReference type="NCBI Taxonomy" id="395492"/>
    <lineage>
        <taxon>Bacteria</taxon>
        <taxon>Pseudomonadati</taxon>
        <taxon>Pseudomonadota</taxon>
        <taxon>Alphaproteobacteria</taxon>
        <taxon>Hyphomicrobiales</taxon>
        <taxon>Rhizobiaceae</taxon>
        <taxon>Rhizobium/Agrobacterium group</taxon>
        <taxon>Rhizobium</taxon>
    </lineage>
</organism>
<dbReference type="EC" id="3.1.11.6" evidence="1"/>
<dbReference type="EMBL" id="CP001191">
    <property type="protein sequence ID" value="ACI53866.1"/>
    <property type="molecule type" value="Genomic_DNA"/>
</dbReference>
<dbReference type="RefSeq" id="WP_003545921.1">
    <property type="nucleotide sequence ID" value="NC_011369.1"/>
</dbReference>
<dbReference type="SMR" id="B5ZS73"/>
<dbReference type="STRING" id="395492.Rleg2_0569"/>
<dbReference type="KEGG" id="rlt:Rleg2_0569"/>
<dbReference type="eggNOG" id="COG1722">
    <property type="taxonomic scope" value="Bacteria"/>
</dbReference>
<dbReference type="HOGENOM" id="CLU_145918_0_3_5"/>
<dbReference type="Proteomes" id="UP000008330">
    <property type="component" value="Chromosome"/>
</dbReference>
<dbReference type="GO" id="GO:0005829">
    <property type="term" value="C:cytosol"/>
    <property type="evidence" value="ECO:0007669"/>
    <property type="project" value="TreeGrafter"/>
</dbReference>
<dbReference type="GO" id="GO:0009318">
    <property type="term" value="C:exodeoxyribonuclease VII complex"/>
    <property type="evidence" value="ECO:0007669"/>
    <property type="project" value="InterPro"/>
</dbReference>
<dbReference type="GO" id="GO:0008855">
    <property type="term" value="F:exodeoxyribonuclease VII activity"/>
    <property type="evidence" value="ECO:0007669"/>
    <property type="project" value="UniProtKB-UniRule"/>
</dbReference>
<dbReference type="GO" id="GO:0006308">
    <property type="term" value="P:DNA catabolic process"/>
    <property type="evidence" value="ECO:0007669"/>
    <property type="project" value="UniProtKB-UniRule"/>
</dbReference>
<dbReference type="Gene3D" id="1.10.287.1040">
    <property type="entry name" value="Exonuclease VII, small subunit"/>
    <property type="match status" value="1"/>
</dbReference>
<dbReference type="HAMAP" id="MF_00337">
    <property type="entry name" value="Exonuc_7_S"/>
    <property type="match status" value="1"/>
</dbReference>
<dbReference type="InterPro" id="IPR003761">
    <property type="entry name" value="Exonuc_VII_S"/>
</dbReference>
<dbReference type="InterPro" id="IPR037004">
    <property type="entry name" value="Exonuc_VII_ssu_sf"/>
</dbReference>
<dbReference type="NCBIfam" id="NF002139">
    <property type="entry name" value="PRK00977.1-3"/>
    <property type="match status" value="1"/>
</dbReference>
<dbReference type="NCBIfam" id="TIGR01280">
    <property type="entry name" value="xseB"/>
    <property type="match status" value="1"/>
</dbReference>
<dbReference type="PANTHER" id="PTHR34137">
    <property type="entry name" value="EXODEOXYRIBONUCLEASE 7 SMALL SUBUNIT"/>
    <property type="match status" value="1"/>
</dbReference>
<dbReference type="PANTHER" id="PTHR34137:SF1">
    <property type="entry name" value="EXODEOXYRIBONUCLEASE 7 SMALL SUBUNIT"/>
    <property type="match status" value="1"/>
</dbReference>
<dbReference type="Pfam" id="PF02609">
    <property type="entry name" value="Exonuc_VII_S"/>
    <property type="match status" value="1"/>
</dbReference>
<dbReference type="SUPFAM" id="SSF116842">
    <property type="entry name" value="XseB-like"/>
    <property type="match status" value="1"/>
</dbReference>
<evidence type="ECO:0000255" key="1">
    <source>
        <dbReference type="HAMAP-Rule" id="MF_00337"/>
    </source>
</evidence>
<sequence>MTDSAKPEVSGLSFEKAVAELESIVARLERGDVALDESIEIYERGEALKKHCETLLSAAENRIEKIRLDRAGKPQGVEPLDGA</sequence>
<keyword id="KW-0963">Cytoplasm</keyword>
<keyword id="KW-0269">Exonuclease</keyword>
<keyword id="KW-0378">Hydrolase</keyword>
<keyword id="KW-0540">Nuclease</keyword>
<keyword id="KW-1185">Reference proteome</keyword>
<reference key="1">
    <citation type="journal article" date="2010" name="Stand. Genomic Sci.">
        <title>Complete genome sequence of Rhizobium leguminosarum bv trifolii strain WSM2304, an effective microsymbiont of the South American clover Trifolium polymorphum.</title>
        <authorList>
            <person name="Reeve W."/>
            <person name="O'Hara G."/>
            <person name="Chain P."/>
            <person name="Ardley J."/>
            <person name="Brau L."/>
            <person name="Nandesena K."/>
            <person name="Tiwari R."/>
            <person name="Malfatti S."/>
            <person name="Kiss H."/>
            <person name="Lapidus A."/>
            <person name="Copeland A."/>
            <person name="Nolan M."/>
            <person name="Land M."/>
            <person name="Ivanova N."/>
            <person name="Mavromatis K."/>
            <person name="Markowitz V."/>
            <person name="Kyrpides N."/>
            <person name="Melino V."/>
            <person name="Denton M."/>
            <person name="Yates R."/>
            <person name="Howieson J."/>
        </authorList>
    </citation>
    <scope>NUCLEOTIDE SEQUENCE [LARGE SCALE GENOMIC DNA]</scope>
    <source>
        <strain>WSM2304</strain>
    </source>
</reference>
<feature type="chain" id="PRO_1000119947" description="Exodeoxyribonuclease 7 small subunit">
    <location>
        <begin position="1"/>
        <end position="83"/>
    </location>
</feature>
<comment type="function">
    <text evidence="1">Bidirectionally degrades single-stranded DNA into large acid-insoluble oligonucleotides, which are then degraded further into small acid-soluble oligonucleotides.</text>
</comment>
<comment type="catalytic activity">
    <reaction evidence="1">
        <text>Exonucleolytic cleavage in either 5'- to 3'- or 3'- to 5'-direction to yield nucleoside 5'-phosphates.</text>
        <dbReference type="EC" id="3.1.11.6"/>
    </reaction>
</comment>
<comment type="subunit">
    <text evidence="1">Heterooligomer composed of large and small subunits.</text>
</comment>
<comment type="subcellular location">
    <subcellularLocation>
        <location evidence="1">Cytoplasm</location>
    </subcellularLocation>
</comment>
<comment type="similarity">
    <text evidence="1">Belongs to the XseB family.</text>
</comment>
<proteinExistence type="inferred from homology"/>
<protein>
    <recommendedName>
        <fullName evidence="1">Exodeoxyribonuclease 7 small subunit</fullName>
        <ecNumber evidence="1">3.1.11.6</ecNumber>
    </recommendedName>
    <alternativeName>
        <fullName evidence="1">Exodeoxyribonuclease VII small subunit</fullName>
        <shortName evidence="1">Exonuclease VII small subunit</shortName>
    </alternativeName>
</protein>
<gene>
    <name evidence="1" type="primary">xseB</name>
    <name type="ordered locus">Rleg2_0569</name>
</gene>
<name>EX7S_RHILW</name>
<accession>B5ZS73</accession>